<dbReference type="EMBL" id="CH477300">
    <property type="protein sequence ID" value="EAT44291.1"/>
    <property type="molecule type" value="Genomic_DNA"/>
</dbReference>
<dbReference type="SMR" id="Q17D30"/>
<dbReference type="FunCoup" id="Q17D30">
    <property type="interactions" value="2196"/>
</dbReference>
<dbReference type="STRING" id="7159.Q17D30"/>
<dbReference type="PaxDb" id="7159-AAEL004347-PA"/>
<dbReference type="EnsemblMetazoa" id="AAEL004347-RA">
    <property type="protein sequence ID" value="AAEL004347-PA"/>
    <property type="gene ID" value="AAEL004347"/>
</dbReference>
<dbReference type="GeneID" id="5564581"/>
<dbReference type="KEGG" id="aag:5564581"/>
<dbReference type="CTD" id="10480"/>
<dbReference type="VEuPathDB" id="VectorBase:AAEL004347"/>
<dbReference type="eggNOG" id="KOG2753">
    <property type="taxonomic scope" value="Eukaryota"/>
</dbReference>
<dbReference type="HOGENOM" id="CLU_035254_1_0_1"/>
<dbReference type="InParanoid" id="Q17D30"/>
<dbReference type="OMA" id="VCLKALW"/>
<dbReference type="OrthoDB" id="7900529at2759"/>
<dbReference type="PhylomeDB" id="Q17D30"/>
<dbReference type="Proteomes" id="UP000008820">
    <property type="component" value="Chromosome 3"/>
</dbReference>
<dbReference type="Proteomes" id="UP000682892">
    <property type="component" value="Unassembled WGS sequence"/>
</dbReference>
<dbReference type="GO" id="GO:0016282">
    <property type="term" value="C:eukaryotic 43S preinitiation complex"/>
    <property type="evidence" value="ECO:0007669"/>
    <property type="project" value="UniProtKB-UniRule"/>
</dbReference>
<dbReference type="GO" id="GO:0033290">
    <property type="term" value="C:eukaryotic 48S preinitiation complex"/>
    <property type="evidence" value="ECO:0007669"/>
    <property type="project" value="UniProtKB-UniRule"/>
</dbReference>
<dbReference type="GO" id="GO:0071541">
    <property type="term" value="C:eukaryotic translation initiation factor 3 complex, eIF3m"/>
    <property type="evidence" value="ECO:0007669"/>
    <property type="project" value="UniProtKB-UniRule"/>
</dbReference>
<dbReference type="GO" id="GO:0003743">
    <property type="term" value="F:translation initiation factor activity"/>
    <property type="evidence" value="ECO:0007669"/>
    <property type="project" value="UniProtKB-UniRule"/>
</dbReference>
<dbReference type="GO" id="GO:0001732">
    <property type="term" value="P:formation of cytoplasmic translation initiation complex"/>
    <property type="evidence" value="ECO:0007669"/>
    <property type="project" value="UniProtKB-UniRule"/>
</dbReference>
<dbReference type="HAMAP" id="MF_03012">
    <property type="entry name" value="eIF3m"/>
    <property type="match status" value="1"/>
</dbReference>
<dbReference type="InterPro" id="IPR016024">
    <property type="entry name" value="ARM-type_fold"/>
</dbReference>
<dbReference type="InterPro" id="IPR045237">
    <property type="entry name" value="COPS7/eIF3m"/>
</dbReference>
<dbReference type="InterPro" id="IPR027528">
    <property type="entry name" value="eIF3m"/>
</dbReference>
<dbReference type="InterPro" id="IPR040750">
    <property type="entry name" value="eIF3m_C_helix"/>
</dbReference>
<dbReference type="InterPro" id="IPR000717">
    <property type="entry name" value="PCI_dom"/>
</dbReference>
<dbReference type="PANTHER" id="PTHR15350">
    <property type="entry name" value="COP9 SIGNALOSOME COMPLEX SUBUNIT 7/DENDRITIC CELL PROTEIN GA17"/>
    <property type="match status" value="1"/>
</dbReference>
<dbReference type="PANTHER" id="PTHR15350:SF2">
    <property type="entry name" value="EUKARYOTIC TRANSLATION INITIATION FACTOR 3 SUBUNIT M"/>
    <property type="match status" value="1"/>
</dbReference>
<dbReference type="Pfam" id="PF18005">
    <property type="entry name" value="eIF3m_C_helix"/>
    <property type="match status" value="1"/>
</dbReference>
<dbReference type="Pfam" id="PF01399">
    <property type="entry name" value="PCI"/>
    <property type="match status" value="1"/>
</dbReference>
<dbReference type="SMART" id="SM00088">
    <property type="entry name" value="PINT"/>
    <property type="match status" value="1"/>
</dbReference>
<dbReference type="SUPFAM" id="SSF48371">
    <property type="entry name" value="ARM repeat"/>
    <property type="match status" value="1"/>
</dbReference>
<dbReference type="PROSITE" id="PS50250">
    <property type="entry name" value="PCI"/>
    <property type="match status" value="1"/>
</dbReference>
<evidence type="ECO:0000255" key="1">
    <source>
        <dbReference type="HAMAP-Rule" id="MF_03012"/>
    </source>
</evidence>
<evidence type="ECO:0000255" key="2">
    <source>
        <dbReference type="PROSITE-ProRule" id="PRU01185"/>
    </source>
</evidence>
<gene>
    <name type="ORF">AAEL004347</name>
</gene>
<comment type="function">
    <text evidence="1">Component of the eukaryotic translation initiation factor 3 (eIF-3) complex, which is involved in protein synthesis of a specialized repertoire of mRNAs and, together with other initiation factors, stimulates binding of mRNA and methionyl-tRNAi to the 40S ribosome. The eIF-3 complex specifically targets and initiates translation of a subset of mRNAs involved in cell proliferation.</text>
</comment>
<comment type="subunit">
    <text evidence="1">Component of the eukaryotic translation initiation factor 3 (eIF-3) complex.</text>
</comment>
<comment type="subcellular location">
    <subcellularLocation>
        <location evidence="1">Cytoplasm</location>
    </subcellularLocation>
</comment>
<comment type="similarity">
    <text evidence="1">Belongs to the eIF-3 subunit M family.</text>
</comment>
<feature type="chain" id="PRO_0000365995" description="Eukaryotic translation initiation factor 3 subunit M">
    <location>
        <begin position="1"/>
        <end position="386"/>
    </location>
</feature>
<feature type="domain" description="PCI" evidence="2">
    <location>
        <begin position="181"/>
        <end position="343"/>
    </location>
</feature>
<keyword id="KW-0963">Cytoplasm</keyword>
<keyword id="KW-0396">Initiation factor</keyword>
<keyword id="KW-0648">Protein biosynthesis</keyword>
<keyword id="KW-1185">Reference proteome</keyword>
<sequence>MQGPAVFIDAEIDDQAQELRKFFKSLGAEISEEKSSKGIEDDLHKIIGVCDVCFKDGTQHTLEEIDAVLNSVVSIIVSIPLERGENLILAFCEKMTRAPDSNLARVCLQSLWRLFSNLEPTSPLRYHVYYHLVQVAKRADQVKEVFSGVDQLKSQFSQCPPSNEQMQKLYRLLHDVLKDTNSELASKVMIELLGTYTAENASYAREDAMKCIVTALADPNTFLLDPLLSLKPVRFLEGELIHDLLSVFVSEKLPSYLQFYKNHKEFVNSQGLNHEQNIKKMRLLSFMQLAESNPEMTFQQLQDELQIGENEVEPFIIEVLKTKLVRARMDQKARKVHISSTMHRTFGRPQWQQLRDLLHAWKANLTLVQENMKSVSEAQIELAHKQ</sequence>
<name>EIF3M_AEDAE</name>
<organism>
    <name type="scientific">Aedes aegypti</name>
    <name type="common">Yellowfever mosquito</name>
    <name type="synonym">Culex aegypti</name>
    <dbReference type="NCBI Taxonomy" id="7159"/>
    <lineage>
        <taxon>Eukaryota</taxon>
        <taxon>Metazoa</taxon>
        <taxon>Ecdysozoa</taxon>
        <taxon>Arthropoda</taxon>
        <taxon>Hexapoda</taxon>
        <taxon>Insecta</taxon>
        <taxon>Pterygota</taxon>
        <taxon>Neoptera</taxon>
        <taxon>Endopterygota</taxon>
        <taxon>Diptera</taxon>
        <taxon>Nematocera</taxon>
        <taxon>Culicoidea</taxon>
        <taxon>Culicidae</taxon>
        <taxon>Culicinae</taxon>
        <taxon>Aedini</taxon>
        <taxon>Aedes</taxon>
        <taxon>Stegomyia</taxon>
    </lineage>
</organism>
<reference key="1">
    <citation type="journal article" date="2007" name="Science">
        <title>Genome sequence of Aedes aegypti, a major arbovirus vector.</title>
        <authorList>
            <person name="Nene V."/>
            <person name="Wortman J.R."/>
            <person name="Lawson D."/>
            <person name="Haas B.J."/>
            <person name="Kodira C.D."/>
            <person name="Tu Z.J."/>
            <person name="Loftus B.J."/>
            <person name="Xi Z."/>
            <person name="Megy K."/>
            <person name="Grabherr M."/>
            <person name="Ren Q."/>
            <person name="Zdobnov E.M."/>
            <person name="Lobo N.F."/>
            <person name="Campbell K.S."/>
            <person name="Brown S.E."/>
            <person name="Bonaldo M.F."/>
            <person name="Zhu J."/>
            <person name="Sinkins S.P."/>
            <person name="Hogenkamp D.G."/>
            <person name="Amedeo P."/>
            <person name="Arensburger P."/>
            <person name="Atkinson P.W."/>
            <person name="Bidwell S.L."/>
            <person name="Biedler J."/>
            <person name="Birney E."/>
            <person name="Bruggner R.V."/>
            <person name="Costas J."/>
            <person name="Coy M.R."/>
            <person name="Crabtree J."/>
            <person name="Crawford M."/>
            <person name="DeBruyn B."/>
            <person name="DeCaprio D."/>
            <person name="Eiglmeier K."/>
            <person name="Eisenstadt E."/>
            <person name="El-Dorry H."/>
            <person name="Gelbart W.M."/>
            <person name="Gomes S.L."/>
            <person name="Hammond M."/>
            <person name="Hannick L.I."/>
            <person name="Hogan J.R."/>
            <person name="Holmes M.H."/>
            <person name="Jaffe D."/>
            <person name="Johnston S.J."/>
            <person name="Kennedy R.C."/>
            <person name="Koo H."/>
            <person name="Kravitz S."/>
            <person name="Kriventseva E.V."/>
            <person name="Kulp D."/>
            <person name="Labutti K."/>
            <person name="Lee E."/>
            <person name="Li S."/>
            <person name="Lovin D.D."/>
            <person name="Mao C."/>
            <person name="Mauceli E."/>
            <person name="Menck C.F."/>
            <person name="Miller J.R."/>
            <person name="Montgomery P."/>
            <person name="Mori A."/>
            <person name="Nascimento A.L."/>
            <person name="Naveira H.F."/>
            <person name="Nusbaum C."/>
            <person name="O'Leary S.B."/>
            <person name="Orvis J."/>
            <person name="Pertea M."/>
            <person name="Quesneville H."/>
            <person name="Reidenbach K.R."/>
            <person name="Rogers Y.-H.C."/>
            <person name="Roth C.W."/>
            <person name="Schneider J.R."/>
            <person name="Schatz M."/>
            <person name="Shumway M."/>
            <person name="Stanke M."/>
            <person name="Stinson E.O."/>
            <person name="Tubio J.M.C."/>
            <person name="Vanzee J.P."/>
            <person name="Verjovski-Almeida S."/>
            <person name="Werner D."/>
            <person name="White O.R."/>
            <person name="Wyder S."/>
            <person name="Zeng Q."/>
            <person name="Zhao Q."/>
            <person name="Zhao Y."/>
            <person name="Hill C.A."/>
            <person name="Raikhel A.S."/>
            <person name="Soares M.B."/>
            <person name="Knudson D.L."/>
            <person name="Lee N.H."/>
            <person name="Galagan J."/>
            <person name="Salzberg S.L."/>
            <person name="Paulsen I.T."/>
            <person name="Dimopoulos G."/>
            <person name="Collins F.H."/>
            <person name="Bruce B."/>
            <person name="Fraser-Liggett C.M."/>
            <person name="Severson D.W."/>
        </authorList>
    </citation>
    <scope>NUCLEOTIDE SEQUENCE [LARGE SCALE GENOMIC DNA]</scope>
    <source>
        <strain>LVPib12</strain>
    </source>
</reference>
<protein>
    <recommendedName>
        <fullName evidence="1">Eukaryotic translation initiation factor 3 subunit M</fullName>
        <shortName evidence="1">eIF3m</shortName>
    </recommendedName>
</protein>
<accession>Q17D30</accession>
<proteinExistence type="inferred from homology"/>